<gene>
    <name evidence="1" type="primary">ydiU</name>
    <name evidence="1" type="synonym">selO</name>
    <name type="ordered locus">ETA_18310</name>
</gene>
<sequence length="479" mass="54959">MQFNNTWLNELNGFHTTLRPMPLKNARLLYYSAELAQDLGLDERLFDAQNVGLWSGERLAEGMQPLAQVYSGHQFGVWAGQLGDGRGLLLGEQQLPDGRKFDWHLKGAGLTPYSRMGDGRAVLRSTLREFLAGEAMYHLGIPTSRALTVVTSDEPVYRETTEAGAMLLRVAESHVRFGHFEHYYYQGQTEKVTQLADYVIRHHWPELVQEKDRYLLWFSDVVQRTARMIAGWQSVGFAHGVMNTDNMSILGLTFDYGPYGFLDDYRPDLICNHSDHQGRYSFENQPMIGLWNLNRLAHALSGLMSPQQLKQALAGYEPELMRCWGEKMRAKLGLLTPAKDDNNILTGLLSLMTKEGSDYTRTFRQLSQSEQLQLRSPMRDEFIDRDAFDSWYNVWRQRVLQEERSDEERQQTMKLANPALVLRNYLAQQAIERAEQDDISVLARLHQALSRPFDDAPEYADLAQRPPDWGKKLEVSCSS</sequence>
<feature type="chain" id="PRO_1000212592" description="Protein nucleotidyltransferase YdiU">
    <location>
        <begin position="1"/>
        <end position="479"/>
    </location>
</feature>
<feature type="active site" description="Proton acceptor" evidence="1">
    <location>
        <position position="245"/>
    </location>
</feature>
<feature type="binding site" evidence="1">
    <location>
        <position position="83"/>
    </location>
    <ligand>
        <name>ATP</name>
        <dbReference type="ChEBI" id="CHEBI:30616"/>
    </ligand>
</feature>
<feature type="binding site" evidence="1">
    <location>
        <position position="85"/>
    </location>
    <ligand>
        <name>ATP</name>
        <dbReference type="ChEBI" id="CHEBI:30616"/>
    </ligand>
</feature>
<feature type="binding site" evidence="1">
    <location>
        <position position="86"/>
    </location>
    <ligand>
        <name>ATP</name>
        <dbReference type="ChEBI" id="CHEBI:30616"/>
    </ligand>
</feature>
<feature type="binding site" evidence="1">
    <location>
        <position position="106"/>
    </location>
    <ligand>
        <name>ATP</name>
        <dbReference type="ChEBI" id="CHEBI:30616"/>
    </ligand>
</feature>
<feature type="binding site" evidence="1">
    <location>
        <position position="118"/>
    </location>
    <ligand>
        <name>ATP</name>
        <dbReference type="ChEBI" id="CHEBI:30616"/>
    </ligand>
</feature>
<feature type="binding site" evidence="1">
    <location>
        <position position="119"/>
    </location>
    <ligand>
        <name>ATP</name>
        <dbReference type="ChEBI" id="CHEBI:30616"/>
    </ligand>
</feature>
<feature type="binding site" evidence="1">
    <location>
        <position position="169"/>
    </location>
    <ligand>
        <name>ATP</name>
        <dbReference type="ChEBI" id="CHEBI:30616"/>
    </ligand>
</feature>
<feature type="binding site" evidence="1">
    <location>
        <position position="176"/>
    </location>
    <ligand>
        <name>ATP</name>
        <dbReference type="ChEBI" id="CHEBI:30616"/>
    </ligand>
</feature>
<feature type="binding site" evidence="1">
    <location>
        <position position="246"/>
    </location>
    <ligand>
        <name>Mg(2+)</name>
        <dbReference type="ChEBI" id="CHEBI:18420"/>
    </ligand>
</feature>
<feature type="binding site" evidence="1">
    <location>
        <position position="255"/>
    </location>
    <ligand>
        <name>ATP</name>
        <dbReference type="ChEBI" id="CHEBI:30616"/>
    </ligand>
</feature>
<feature type="binding site" evidence="1">
    <location>
        <position position="255"/>
    </location>
    <ligand>
        <name>Mg(2+)</name>
        <dbReference type="ChEBI" id="CHEBI:18420"/>
    </ligand>
</feature>
<dbReference type="EC" id="2.7.7.-" evidence="1"/>
<dbReference type="EC" id="2.7.7.108" evidence="1"/>
<dbReference type="EMBL" id="CU468135">
    <property type="protein sequence ID" value="CAO96877.1"/>
    <property type="molecule type" value="Genomic_DNA"/>
</dbReference>
<dbReference type="RefSeq" id="WP_012441563.1">
    <property type="nucleotide sequence ID" value="NC_010694.1"/>
</dbReference>
<dbReference type="SMR" id="B2VEL5"/>
<dbReference type="STRING" id="465817.ETA_18310"/>
<dbReference type="KEGG" id="eta:ETA_18310"/>
<dbReference type="eggNOG" id="COG0397">
    <property type="taxonomic scope" value="Bacteria"/>
</dbReference>
<dbReference type="HOGENOM" id="CLU_010245_4_1_6"/>
<dbReference type="OrthoDB" id="9776281at2"/>
<dbReference type="Proteomes" id="UP000001726">
    <property type="component" value="Chromosome"/>
</dbReference>
<dbReference type="GO" id="GO:0070733">
    <property type="term" value="F:AMPylase activity"/>
    <property type="evidence" value="ECO:0007669"/>
    <property type="project" value="TreeGrafter"/>
</dbReference>
<dbReference type="GO" id="GO:0005524">
    <property type="term" value="F:ATP binding"/>
    <property type="evidence" value="ECO:0007669"/>
    <property type="project" value="UniProtKB-UniRule"/>
</dbReference>
<dbReference type="GO" id="GO:0000287">
    <property type="term" value="F:magnesium ion binding"/>
    <property type="evidence" value="ECO:0007669"/>
    <property type="project" value="UniProtKB-UniRule"/>
</dbReference>
<dbReference type="HAMAP" id="MF_00692">
    <property type="entry name" value="YdiU_SelO"/>
    <property type="match status" value="1"/>
</dbReference>
<dbReference type="InterPro" id="IPR003846">
    <property type="entry name" value="SelO"/>
</dbReference>
<dbReference type="NCBIfam" id="NF000658">
    <property type="entry name" value="PRK00029.1"/>
    <property type="match status" value="1"/>
</dbReference>
<dbReference type="PANTHER" id="PTHR32057">
    <property type="entry name" value="PROTEIN ADENYLYLTRANSFERASE SELO, MITOCHONDRIAL"/>
    <property type="match status" value="1"/>
</dbReference>
<dbReference type="PANTHER" id="PTHR32057:SF14">
    <property type="entry name" value="PROTEIN ADENYLYLTRANSFERASE SELO, MITOCHONDRIAL"/>
    <property type="match status" value="1"/>
</dbReference>
<dbReference type="Pfam" id="PF02696">
    <property type="entry name" value="SelO"/>
    <property type="match status" value="1"/>
</dbReference>
<keyword id="KW-0067">ATP-binding</keyword>
<keyword id="KW-0460">Magnesium</keyword>
<keyword id="KW-0464">Manganese</keyword>
<keyword id="KW-0479">Metal-binding</keyword>
<keyword id="KW-0547">Nucleotide-binding</keyword>
<keyword id="KW-0548">Nucleotidyltransferase</keyword>
<keyword id="KW-1185">Reference proteome</keyword>
<keyword id="KW-0808">Transferase</keyword>
<reference key="1">
    <citation type="journal article" date="2008" name="Environ. Microbiol.">
        <title>The genome of Erwinia tasmaniensis strain Et1/99, a non-pathogenic bacterium in the genus Erwinia.</title>
        <authorList>
            <person name="Kube M."/>
            <person name="Migdoll A.M."/>
            <person name="Mueller I."/>
            <person name="Kuhl H."/>
            <person name="Beck A."/>
            <person name="Reinhardt R."/>
            <person name="Geider K."/>
        </authorList>
    </citation>
    <scope>NUCLEOTIDE SEQUENCE [LARGE SCALE GENOMIC DNA]</scope>
    <source>
        <strain>DSM 17950 / CFBP 7177 / CIP 109463 / NCPPB 4357 / Et1/99</strain>
    </source>
</reference>
<comment type="function">
    <text evidence="1">Nucleotidyltransferase involved in the post-translational modification of proteins. It can catalyze the addition of adenosine monophosphate (AMP) or uridine monophosphate (UMP) to a protein, resulting in modifications known as AMPylation and UMPylation.</text>
</comment>
<comment type="catalytic activity">
    <reaction evidence="1">
        <text>L-seryl-[protein] + ATP = 3-O-(5'-adenylyl)-L-seryl-[protein] + diphosphate</text>
        <dbReference type="Rhea" id="RHEA:58120"/>
        <dbReference type="Rhea" id="RHEA-COMP:9863"/>
        <dbReference type="Rhea" id="RHEA-COMP:15073"/>
        <dbReference type="ChEBI" id="CHEBI:29999"/>
        <dbReference type="ChEBI" id="CHEBI:30616"/>
        <dbReference type="ChEBI" id="CHEBI:33019"/>
        <dbReference type="ChEBI" id="CHEBI:142516"/>
        <dbReference type="EC" id="2.7.7.108"/>
    </reaction>
</comment>
<comment type="catalytic activity">
    <reaction evidence="1">
        <text>L-threonyl-[protein] + ATP = 3-O-(5'-adenylyl)-L-threonyl-[protein] + diphosphate</text>
        <dbReference type="Rhea" id="RHEA:54292"/>
        <dbReference type="Rhea" id="RHEA-COMP:11060"/>
        <dbReference type="Rhea" id="RHEA-COMP:13847"/>
        <dbReference type="ChEBI" id="CHEBI:30013"/>
        <dbReference type="ChEBI" id="CHEBI:30616"/>
        <dbReference type="ChEBI" id="CHEBI:33019"/>
        <dbReference type="ChEBI" id="CHEBI:138113"/>
        <dbReference type="EC" id="2.7.7.108"/>
    </reaction>
</comment>
<comment type="catalytic activity">
    <reaction evidence="1">
        <text>L-tyrosyl-[protein] + ATP = O-(5'-adenylyl)-L-tyrosyl-[protein] + diphosphate</text>
        <dbReference type="Rhea" id="RHEA:54288"/>
        <dbReference type="Rhea" id="RHEA-COMP:10136"/>
        <dbReference type="Rhea" id="RHEA-COMP:13846"/>
        <dbReference type="ChEBI" id="CHEBI:30616"/>
        <dbReference type="ChEBI" id="CHEBI:33019"/>
        <dbReference type="ChEBI" id="CHEBI:46858"/>
        <dbReference type="ChEBI" id="CHEBI:83624"/>
        <dbReference type="EC" id="2.7.7.108"/>
    </reaction>
</comment>
<comment type="catalytic activity">
    <reaction evidence="1">
        <text>L-histidyl-[protein] + UTP = N(tele)-(5'-uridylyl)-L-histidyl-[protein] + diphosphate</text>
        <dbReference type="Rhea" id="RHEA:83891"/>
        <dbReference type="Rhea" id="RHEA-COMP:9745"/>
        <dbReference type="Rhea" id="RHEA-COMP:20239"/>
        <dbReference type="ChEBI" id="CHEBI:29979"/>
        <dbReference type="ChEBI" id="CHEBI:33019"/>
        <dbReference type="ChEBI" id="CHEBI:46398"/>
        <dbReference type="ChEBI" id="CHEBI:233474"/>
    </reaction>
</comment>
<comment type="catalytic activity">
    <reaction evidence="1">
        <text>L-seryl-[protein] + UTP = O-(5'-uridylyl)-L-seryl-[protein] + diphosphate</text>
        <dbReference type="Rhea" id="RHEA:64604"/>
        <dbReference type="Rhea" id="RHEA-COMP:9863"/>
        <dbReference type="Rhea" id="RHEA-COMP:16635"/>
        <dbReference type="ChEBI" id="CHEBI:29999"/>
        <dbReference type="ChEBI" id="CHEBI:33019"/>
        <dbReference type="ChEBI" id="CHEBI:46398"/>
        <dbReference type="ChEBI" id="CHEBI:156051"/>
    </reaction>
</comment>
<comment type="catalytic activity">
    <reaction evidence="1">
        <text>L-tyrosyl-[protein] + UTP = O-(5'-uridylyl)-L-tyrosyl-[protein] + diphosphate</text>
        <dbReference type="Rhea" id="RHEA:83887"/>
        <dbReference type="Rhea" id="RHEA-COMP:10136"/>
        <dbReference type="Rhea" id="RHEA-COMP:20238"/>
        <dbReference type="ChEBI" id="CHEBI:33019"/>
        <dbReference type="ChEBI" id="CHEBI:46398"/>
        <dbReference type="ChEBI" id="CHEBI:46858"/>
        <dbReference type="ChEBI" id="CHEBI:90602"/>
    </reaction>
</comment>
<comment type="cofactor">
    <cofactor evidence="1">
        <name>Mg(2+)</name>
        <dbReference type="ChEBI" id="CHEBI:18420"/>
    </cofactor>
    <cofactor evidence="1">
        <name>Mn(2+)</name>
        <dbReference type="ChEBI" id="CHEBI:29035"/>
    </cofactor>
</comment>
<comment type="similarity">
    <text evidence="1">Belongs to the SELO family.</text>
</comment>
<evidence type="ECO:0000255" key="1">
    <source>
        <dbReference type="HAMAP-Rule" id="MF_00692"/>
    </source>
</evidence>
<accession>B2VEL5</accession>
<organism>
    <name type="scientific">Erwinia tasmaniensis (strain DSM 17950 / CFBP 7177 / CIP 109463 / NCPPB 4357 / Et1/99)</name>
    <dbReference type="NCBI Taxonomy" id="465817"/>
    <lineage>
        <taxon>Bacteria</taxon>
        <taxon>Pseudomonadati</taxon>
        <taxon>Pseudomonadota</taxon>
        <taxon>Gammaproteobacteria</taxon>
        <taxon>Enterobacterales</taxon>
        <taxon>Erwiniaceae</taxon>
        <taxon>Erwinia</taxon>
    </lineage>
</organism>
<proteinExistence type="inferred from homology"/>
<protein>
    <recommendedName>
        <fullName evidence="1">Protein nucleotidyltransferase YdiU</fullName>
        <ecNumber evidence="1">2.7.7.-</ecNumber>
    </recommendedName>
    <alternativeName>
        <fullName evidence="1">Protein adenylyltransferase YdiU</fullName>
        <ecNumber evidence="1">2.7.7.108</ecNumber>
    </alternativeName>
    <alternativeName>
        <fullName evidence="1">Protein uridylyltransferase YdiU</fullName>
        <ecNumber evidence="1">2.7.7.-</ecNumber>
    </alternativeName>
</protein>
<name>SELO_ERWT9</name>